<organism>
    <name type="scientific">Cyanidioschyzon merolae (strain NIES-3377 / 10D)</name>
    <name type="common">Unicellular red alga</name>
    <dbReference type="NCBI Taxonomy" id="280699"/>
    <lineage>
        <taxon>Eukaryota</taxon>
        <taxon>Rhodophyta</taxon>
        <taxon>Bangiophyceae</taxon>
        <taxon>Cyanidiales</taxon>
        <taxon>Cyanidiaceae</taxon>
        <taxon>Cyanidioschyzon</taxon>
    </lineage>
</organism>
<accession>Q85FQ9</accession>
<comment type="function">
    <text evidence="1">F(1)F(0) ATP synthase produces ATP from ADP in the presence of a proton or sodium gradient. F-type ATPases consist of two structural domains, F(1) containing the extramembraneous catalytic core and F(0) containing the membrane proton channel, linked together by a central stalk and a peripheral stalk. During catalysis, ATP synthesis in the catalytic domain of F(1) is coupled via a rotary mechanism of the central stalk subunits to proton translocation.</text>
</comment>
<comment type="function">
    <text evidence="1">This protein is part of the stalk that links CF(0) to CF(1). It either transmits conformational changes from CF(0) to CF(1) or is implicated in proton conduction.</text>
</comment>
<comment type="subunit">
    <text evidence="1">F-type ATPases have 2 components, F(1) - the catalytic core - and F(0) - the membrane proton channel. F(1) has five subunits: alpha(3), beta(3), gamma(1), delta(1), epsilon(1). CF(0) has four main subunits: a(1), b(1), b'(1) and c(10-14). The alpha and beta chains form an alternating ring which encloses part of the gamma chain. F(1) is attached to F(0) by a central stalk formed by the gamma and epsilon chains, while a peripheral stalk is formed by the delta, b and b' chains.</text>
</comment>
<comment type="subcellular location">
    <subcellularLocation>
        <location evidence="1">Plastid</location>
        <location evidence="1">Chloroplast thylakoid membrane</location>
        <topology evidence="1">Peripheral membrane protein</topology>
    </subcellularLocation>
</comment>
<comment type="similarity">
    <text evidence="1">Belongs to the ATPase delta chain family.</text>
</comment>
<keyword id="KW-0066">ATP synthesis</keyword>
<keyword id="KW-0139">CF(1)</keyword>
<keyword id="KW-0150">Chloroplast</keyword>
<keyword id="KW-0375">Hydrogen ion transport</keyword>
<keyword id="KW-0406">Ion transport</keyword>
<keyword id="KW-0472">Membrane</keyword>
<keyword id="KW-0934">Plastid</keyword>
<keyword id="KW-1185">Reference proteome</keyword>
<keyword id="KW-0793">Thylakoid</keyword>
<keyword id="KW-0813">Transport</keyword>
<feature type="chain" id="PRO_0000382174" description="ATP synthase subunit delta, chloroplastic">
    <location>
        <begin position="1"/>
        <end position="163"/>
    </location>
</feature>
<sequence length="163" mass="19233">MKQKIVEPYAQALFRLKDDIDLTPLWEMARDSKFMQLLMNPSIPKEKKWQLFQPFDKLVQSWLEVIWKKKRMNLLAEICASYLELRKKKEGIVTVFVTSATPLTDTQTQQLEVQLTRMCQAKHLQCEYQVDAQLLAGLKIQMNGQLIDTSWQTQLKQLMKSLW</sequence>
<name>ATPD_CYAM1</name>
<protein>
    <recommendedName>
        <fullName evidence="1">ATP synthase subunit delta, chloroplastic</fullName>
    </recommendedName>
    <alternativeName>
        <fullName evidence="1">ATP synthase F(1) sector subunit delta</fullName>
    </alternativeName>
    <alternativeName>
        <fullName evidence="1">F-type ATPase subunit delta</fullName>
    </alternativeName>
</protein>
<dbReference type="EMBL" id="AB002583">
    <property type="protein sequence ID" value="BAC76286.1"/>
    <property type="molecule type" value="Genomic_DNA"/>
</dbReference>
<dbReference type="RefSeq" id="NP_849124.1">
    <property type="nucleotide sequence ID" value="NC_004799.1"/>
</dbReference>
<dbReference type="SMR" id="Q85FQ9"/>
<dbReference type="STRING" id="280699.Q85FQ9"/>
<dbReference type="EnsemblPlants" id="CMV224CT">
    <property type="protein sequence ID" value="CMV224CT"/>
    <property type="gene ID" value="CMV224C"/>
</dbReference>
<dbReference type="GeneID" id="844867"/>
<dbReference type="Gramene" id="CMV224CT">
    <property type="protein sequence ID" value="CMV224CT"/>
    <property type="gene ID" value="CMV224C"/>
</dbReference>
<dbReference type="KEGG" id="cme:CymeCp192"/>
<dbReference type="HOGENOM" id="CLU_085114_3_0_1"/>
<dbReference type="Proteomes" id="UP000007014">
    <property type="component" value="Chloroplast"/>
</dbReference>
<dbReference type="GO" id="GO:0009535">
    <property type="term" value="C:chloroplast thylakoid membrane"/>
    <property type="evidence" value="ECO:0007669"/>
    <property type="project" value="UniProtKB-SubCell"/>
</dbReference>
<dbReference type="GO" id="GO:0045259">
    <property type="term" value="C:proton-transporting ATP synthase complex"/>
    <property type="evidence" value="ECO:0007669"/>
    <property type="project" value="UniProtKB-KW"/>
</dbReference>
<dbReference type="GO" id="GO:0046933">
    <property type="term" value="F:proton-transporting ATP synthase activity, rotational mechanism"/>
    <property type="evidence" value="ECO:0007669"/>
    <property type="project" value="UniProtKB-UniRule"/>
</dbReference>
<dbReference type="Gene3D" id="1.10.520.20">
    <property type="entry name" value="N-terminal domain of the delta subunit of the F1F0-ATP synthase"/>
    <property type="match status" value="1"/>
</dbReference>
<dbReference type="HAMAP" id="MF_01416">
    <property type="entry name" value="ATP_synth_delta_bact"/>
    <property type="match status" value="1"/>
</dbReference>
<dbReference type="InterPro" id="IPR026015">
    <property type="entry name" value="ATP_synth_OSCP/delta_N_sf"/>
</dbReference>
<dbReference type="InterPro" id="IPR000711">
    <property type="entry name" value="ATPase_OSCP/dsu"/>
</dbReference>
<dbReference type="NCBIfam" id="TIGR01145">
    <property type="entry name" value="ATP_synt_delta"/>
    <property type="match status" value="1"/>
</dbReference>
<dbReference type="PANTHER" id="PTHR11910">
    <property type="entry name" value="ATP SYNTHASE DELTA CHAIN"/>
    <property type="match status" value="1"/>
</dbReference>
<dbReference type="Pfam" id="PF00213">
    <property type="entry name" value="OSCP"/>
    <property type="match status" value="1"/>
</dbReference>
<dbReference type="PRINTS" id="PR00125">
    <property type="entry name" value="ATPASEDELTA"/>
</dbReference>
<dbReference type="SUPFAM" id="SSF47928">
    <property type="entry name" value="N-terminal domain of the delta subunit of the F1F0-ATP synthase"/>
    <property type="match status" value="1"/>
</dbReference>
<evidence type="ECO:0000255" key="1">
    <source>
        <dbReference type="HAMAP-Rule" id="MF_01416"/>
    </source>
</evidence>
<proteinExistence type="inferred from homology"/>
<reference key="1">
    <citation type="journal article" date="2003" name="DNA Res.">
        <title>Complete sequence and analysis of the plastid genome of the unicellular red alga Cyanidioschyzon merolae.</title>
        <authorList>
            <person name="Ohta N."/>
            <person name="Matsuzaki M."/>
            <person name="Misumi O."/>
            <person name="Miyagishima S.-Y."/>
            <person name="Nozaki H."/>
            <person name="Tanaka K."/>
            <person name="Shin-i T."/>
            <person name="Kohara Y."/>
            <person name="Kuroiwa T."/>
        </authorList>
    </citation>
    <scope>NUCLEOTIDE SEQUENCE [LARGE SCALE GENOMIC DNA]</scope>
    <source>
        <strain>NIES-3377 / 10D</strain>
    </source>
</reference>
<geneLocation type="chloroplast"/>
<gene>
    <name evidence="1" type="primary">atpD</name>
</gene>